<reference key="1">
    <citation type="journal article" date="2001" name="Nature">
        <title>Complete genome sequence of a multiple drug resistant Salmonella enterica serovar Typhi CT18.</title>
        <authorList>
            <person name="Parkhill J."/>
            <person name="Dougan G."/>
            <person name="James K.D."/>
            <person name="Thomson N.R."/>
            <person name="Pickard D."/>
            <person name="Wain J."/>
            <person name="Churcher C.M."/>
            <person name="Mungall K.L."/>
            <person name="Bentley S.D."/>
            <person name="Holden M.T.G."/>
            <person name="Sebaihia M."/>
            <person name="Baker S."/>
            <person name="Basham D."/>
            <person name="Brooks K."/>
            <person name="Chillingworth T."/>
            <person name="Connerton P."/>
            <person name="Cronin A."/>
            <person name="Davis P."/>
            <person name="Davies R.M."/>
            <person name="Dowd L."/>
            <person name="White N."/>
            <person name="Farrar J."/>
            <person name="Feltwell T."/>
            <person name="Hamlin N."/>
            <person name="Haque A."/>
            <person name="Hien T.T."/>
            <person name="Holroyd S."/>
            <person name="Jagels K."/>
            <person name="Krogh A."/>
            <person name="Larsen T.S."/>
            <person name="Leather S."/>
            <person name="Moule S."/>
            <person name="O'Gaora P."/>
            <person name="Parry C."/>
            <person name="Quail M.A."/>
            <person name="Rutherford K.M."/>
            <person name="Simmonds M."/>
            <person name="Skelton J."/>
            <person name="Stevens K."/>
            <person name="Whitehead S."/>
            <person name="Barrell B.G."/>
        </authorList>
    </citation>
    <scope>NUCLEOTIDE SEQUENCE [LARGE SCALE GENOMIC DNA]</scope>
    <source>
        <strain>CT18</strain>
    </source>
</reference>
<reference key="2">
    <citation type="journal article" date="2003" name="J. Bacteriol.">
        <title>Comparative genomics of Salmonella enterica serovar Typhi strains Ty2 and CT18.</title>
        <authorList>
            <person name="Deng W."/>
            <person name="Liou S.-R."/>
            <person name="Plunkett G. III"/>
            <person name="Mayhew G.F."/>
            <person name="Rose D.J."/>
            <person name="Burland V."/>
            <person name="Kodoyianni V."/>
            <person name="Schwartz D.C."/>
            <person name="Blattner F.R."/>
        </authorList>
    </citation>
    <scope>NUCLEOTIDE SEQUENCE [LARGE SCALE GENOMIC DNA]</scope>
    <source>
        <strain>ATCC 700931 / Ty2</strain>
    </source>
</reference>
<gene>
    <name evidence="1" type="primary">pdxB</name>
    <name type="ordered locus">STY2601</name>
    <name type="ordered locus">t0494</name>
</gene>
<organism>
    <name type="scientific">Salmonella typhi</name>
    <dbReference type="NCBI Taxonomy" id="90370"/>
    <lineage>
        <taxon>Bacteria</taxon>
        <taxon>Pseudomonadati</taxon>
        <taxon>Pseudomonadota</taxon>
        <taxon>Gammaproteobacteria</taxon>
        <taxon>Enterobacterales</taxon>
        <taxon>Enterobacteriaceae</taxon>
        <taxon>Salmonella</taxon>
    </lineage>
</organism>
<keyword id="KW-0963">Cytoplasm</keyword>
<keyword id="KW-0520">NAD</keyword>
<keyword id="KW-0560">Oxidoreductase</keyword>
<keyword id="KW-0664">Pyridoxine biosynthesis</keyword>
<sequence>MKILVDENMPYARELFSRLGEVKAVPGRPIPVEELNHADALMVRSVTKVNESLLSGTPINFVGTATAGTDHVDEAWLKQAGIGFSAAPGCNAIAVVEYVFSALLMLAERDGFSLRDRTIGIVGVGNVGSRLQTRLEALGIRTLLCDPPRAARGDEGDFRTLDELVQEADVLTFHTPLYKDGPYKTLHLADETLIRRLKPGAILINACRGPVVDNAALLARLNAGQPLSVVLDVWEGEPDLNVALLEAVDIGTSHIAGYTLEGKARGTTQVFEAYSAFIGREQRVALETLLPAPEFGRITLHGPLDQPTLKRLAHLVYDVRRDDAPLRKVAGIPGEFDKLRKNYLERREWSSLYVMCDDETAAALLCKLGFNAVHHPAH</sequence>
<dbReference type="EC" id="1.1.1.290" evidence="1"/>
<dbReference type="EMBL" id="AL513382">
    <property type="protein sequence ID" value="CAD07602.1"/>
    <property type="molecule type" value="Genomic_DNA"/>
</dbReference>
<dbReference type="EMBL" id="AE014613">
    <property type="protein sequence ID" value="AAO68200.1"/>
    <property type="molecule type" value="Genomic_DNA"/>
</dbReference>
<dbReference type="RefSeq" id="NP_456912.1">
    <property type="nucleotide sequence ID" value="NC_003198.1"/>
</dbReference>
<dbReference type="RefSeq" id="WP_000699178.1">
    <property type="nucleotide sequence ID" value="NZ_WSUR01000029.1"/>
</dbReference>
<dbReference type="SMR" id="P60801"/>
<dbReference type="STRING" id="220341.gene:17586499"/>
<dbReference type="KEGG" id="stt:t0494"/>
<dbReference type="KEGG" id="sty:STY2601"/>
<dbReference type="PATRIC" id="fig|220341.7.peg.2634"/>
<dbReference type="eggNOG" id="COG0111">
    <property type="taxonomic scope" value="Bacteria"/>
</dbReference>
<dbReference type="HOGENOM" id="CLU_019796_4_0_6"/>
<dbReference type="OMA" id="SAPGCNA"/>
<dbReference type="OrthoDB" id="9770208at2"/>
<dbReference type="UniPathway" id="UPA00244">
    <property type="reaction ID" value="UER00310"/>
</dbReference>
<dbReference type="Proteomes" id="UP000000541">
    <property type="component" value="Chromosome"/>
</dbReference>
<dbReference type="Proteomes" id="UP000002670">
    <property type="component" value="Chromosome"/>
</dbReference>
<dbReference type="GO" id="GO:0005829">
    <property type="term" value="C:cytosol"/>
    <property type="evidence" value="ECO:0007669"/>
    <property type="project" value="TreeGrafter"/>
</dbReference>
<dbReference type="GO" id="GO:0033711">
    <property type="term" value="F:4-phosphoerythronate dehydrogenase activity"/>
    <property type="evidence" value="ECO:0007669"/>
    <property type="project" value="UniProtKB-EC"/>
</dbReference>
<dbReference type="GO" id="GO:0051287">
    <property type="term" value="F:NAD binding"/>
    <property type="evidence" value="ECO:0007669"/>
    <property type="project" value="InterPro"/>
</dbReference>
<dbReference type="GO" id="GO:0046983">
    <property type="term" value="F:protein dimerization activity"/>
    <property type="evidence" value="ECO:0007669"/>
    <property type="project" value="InterPro"/>
</dbReference>
<dbReference type="GO" id="GO:0036001">
    <property type="term" value="P:'de novo' pyridoxal 5'-phosphate biosynthetic process"/>
    <property type="evidence" value="ECO:0007669"/>
    <property type="project" value="TreeGrafter"/>
</dbReference>
<dbReference type="GO" id="GO:0008615">
    <property type="term" value="P:pyridoxine biosynthetic process"/>
    <property type="evidence" value="ECO:0007669"/>
    <property type="project" value="UniProtKB-UniRule"/>
</dbReference>
<dbReference type="CDD" id="cd12158">
    <property type="entry name" value="ErythrP_dh"/>
    <property type="match status" value="1"/>
</dbReference>
<dbReference type="FunFam" id="3.30.1370.170:FF:000001">
    <property type="entry name" value="Erythronate-4-phosphate dehydrogenase"/>
    <property type="match status" value="1"/>
</dbReference>
<dbReference type="FunFam" id="3.40.50.720:FF:000093">
    <property type="entry name" value="Erythronate-4-phosphate dehydrogenase"/>
    <property type="match status" value="1"/>
</dbReference>
<dbReference type="Gene3D" id="3.30.1370.170">
    <property type="match status" value="1"/>
</dbReference>
<dbReference type="Gene3D" id="3.40.50.720">
    <property type="entry name" value="NAD(P)-binding Rossmann-like Domain"/>
    <property type="match status" value="2"/>
</dbReference>
<dbReference type="HAMAP" id="MF_01825">
    <property type="entry name" value="PdxB"/>
    <property type="match status" value="1"/>
</dbReference>
<dbReference type="InterPro" id="IPR006139">
    <property type="entry name" value="D-isomer_2_OHA_DH_cat_dom"/>
</dbReference>
<dbReference type="InterPro" id="IPR029753">
    <property type="entry name" value="D-isomer_DH_CS"/>
</dbReference>
<dbReference type="InterPro" id="IPR029752">
    <property type="entry name" value="D-isomer_DH_CS1"/>
</dbReference>
<dbReference type="InterPro" id="IPR006140">
    <property type="entry name" value="D-isomer_DH_NAD-bd"/>
</dbReference>
<dbReference type="InterPro" id="IPR020921">
    <property type="entry name" value="Erythronate-4-P_DHase"/>
</dbReference>
<dbReference type="InterPro" id="IPR024531">
    <property type="entry name" value="Erythronate-4-P_DHase_dimer"/>
</dbReference>
<dbReference type="InterPro" id="IPR036291">
    <property type="entry name" value="NAD(P)-bd_dom_sf"/>
</dbReference>
<dbReference type="InterPro" id="IPR038251">
    <property type="entry name" value="PdxB_dimer_sf"/>
</dbReference>
<dbReference type="NCBIfam" id="NF001309">
    <property type="entry name" value="PRK00257.1"/>
    <property type="match status" value="1"/>
</dbReference>
<dbReference type="NCBIfam" id="NF011966">
    <property type="entry name" value="PRK15438.1"/>
    <property type="match status" value="1"/>
</dbReference>
<dbReference type="PANTHER" id="PTHR42938">
    <property type="entry name" value="FORMATE DEHYDROGENASE 1"/>
    <property type="match status" value="1"/>
</dbReference>
<dbReference type="PANTHER" id="PTHR42938:SF9">
    <property type="entry name" value="FORMATE DEHYDROGENASE 1"/>
    <property type="match status" value="1"/>
</dbReference>
<dbReference type="Pfam" id="PF00389">
    <property type="entry name" value="2-Hacid_dh"/>
    <property type="match status" value="1"/>
</dbReference>
<dbReference type="Pfam" id="PF02826">
    <property type="entry name" value="2-Hacid_dh_C"/>
    <property type="match status" value="1"/>
</dbReference>
<dbReference type="Pfam" id="PF11890">
    <property type="entry name" value="DUF3410"/>
    <property type="match status" value="1"/>
</dbReference>
<dbReference type="SUPFAM" id="SSF52283">
    <property type="entry name" value="Formate/glycerate dehydrogenase catalytic domain-like"/>
    <property type="match status" value="1"/>
</dbReference>
<dbReference type="SUPFAM" id="SSF51735">
    <property type="entry name" value="NAD(P)-binding Rossmann-fold domains"/>
    <property type="match status" value="1"/>
</dbReference>
<dbReference type="PROSITE" id="PS00065">
    <property type="entry name" value="D_2_HYDROXYACID_DH_1"/>
    <property type="match status" value="1"/>
</dbReference>
<dbReference type="PROSITE" id="PS00671">
    <property type="entry name" value="D_2_HYDROXYACID_DH_3"/>
    <property type="match status" value="1"/>
</dbReference>
<name>PDXB_SALTI</name>
<feature type="chain" id="PRO_0000075985" description="Erythronate-4-phosphate dehydrogenase">
    <location>
        <begin position="1"/>
        <end position="378"/>
    </location>
</feature>
<feature type="active site" evidence="1">
    <location>
        <position position="208"/>
    </location>
</feature>
<feature type="active site" evidence="1">
    <location>
        <position position="237"/>
    </location>
</feature>
<feature type="active site" description="Proton donor" evidence="1">
    <location>
        <position position="254"/>
    </location>
</feature>
<feature type="binding site" evidence="1">
    <location>
        <position position="45"/>
    </location>
    <ligand>
        <name>substrate</name>
    </ligand>
</feature>
<feature type="binding site" evidence="1">
    <location>
        <position position="66"/>
    </location>
    <ligand>
        <name>substrate</name>
    </ligand>
</feature>
<feature type="binding site" evidence="1">
    <location>
        <position position="146"/>
    </location>
    <ligand>
        <name>NAD(+)</name>
        <dbReference type="ChEBI" id="CHEBI:57540"/>
    </ligand>
</feature>
<feature type="binding site" evidence="1">
    <location>
        <position position="175"/>
    </location>
    <ligand>
        <name>NAD(+)</name>
        <dbReference type="ChEBI" id="CHEBI:57540"/>
    </ligand>
</feature>
<feature type="binding site" evidence="1">
    <location>
        <position position="232"/>
    </location>
    <ligand>
        <name>NAD(+)</name>
        <dbReference type="ChEBI" id="CHEBI:57540"/>
    </ligand>
</feature>
<feature type="binding site" evidence="1">
    <location>
        <position position="257"/>
    </location>
    <ligand>
        <name>NAD(+)</name>
        <dbReference type="ChEBI" id="CHEBI:57540"/>
    </ligand>
</feature>
<feature type="binding site" evidence="1">
    <location>
        <position position="258"/>
    </location>
    <ligand>
        <name>substrate</name>
    </ligand>
</feature>
<protein>
    <recommendedName>
        <fullName evidence="1">Erythronate-4-phosphate dehydrogenase</fullName>
        <ecNumber evidence="1">1.1.1.290</ecNumber>
    </recommendedName>
</protein>
<proteinExistence type="inferred from homology"/>
<accession>P60801</accession>
<accession>Q8XGK3</accession>
<comment type="function">
    <text evidence="1">Catalyzes the oxidation of erythronate-4-phosphate to 3-hydroxy-2-oxo-4-phosphonooxybutanoate.</text>
</comment>
<comment type="catalytic activity">
    <reaction evidence="1">
        <text>4-phospho-D-erythronate + NAD(+) = (R)-3-hydroxy-2-oxo-4-phosphooxybutanoate + NADH + H(+)</text>
        <dbReference type="Rhea" id="RHEA:18829"/>
        <dbReference type="ChEBI" id="CHEBI:15378"/>
        <dbReference type="ChEBI" id="CHEBI:57540"/>
        <dbReference type="ChEBI" id="CHEBI:57945"/>
        <dbReference type="ChEBI" id="CHEBI:58538"/>
        <dbReference type="ChEBI" id="CHEBI:58766"/>
        <dbReference type="EC" id="1.1.1.290"/>
    </reaction>
</comment>
<comment type="pathway">
    <text evidence="1">Cofactor biosynthesis; pyridoxine 5'-phosphate biosynthesis; pyridoxine 5'-phosphate from D-erythrose 4-phosphate: step 2/5.</text>
</comment>
<comment type="subunit">
    <text evidence="1">Homodimer.</text>
</comment>
<comment type="subcellular location">
    <subcellularLocation>
        <location evidence="1">Cytoplasm</location>
    </subcellularLocation>
</comment>
<comment type="similarity">
    <text evidence="1">Belongs to the D-isomer specific 2-hydroxyacid dehydrogenase family. PdxB subfamily.</text>
</comment>
<evidence type="ECO:0000255" key="1">
    <source>
        <dbReference type="HAMAP-Rule" id="MF_01825"/>
    </source>
</evidence>